<feature type="chain" id="PRO_0000312351" description="Fatty acid 2-hydroxylase">
    <location>
        <begin position="1"/>
        <end position="372"/>
    </location>
</feature>
<feature type="transmembrane region" description="Helical" evidence="3">
    <location>
        <begin position="168"/>
        <end position="188"/>
    </location>
</feature>
<feature type="transmembrane region" description="Helical" evidence="3">
    <location>
        <begin position="213"/>
        <end position="233"/>
    </location>
</feature>
<feature type="transmembrane region" description="Helical" evidence="3">
    <location>
        <begin position="268"/>
        <end position="288"/>
    </location>
</feature>
<feature type="transmembrane region" description="Helical" evidence="3">
    <location>
        <begin position="290"/>
        <end position="310"/>
    </location>
</feature>
<feature type="domain" description="Cytochrome b5 heme-binding" evidence="4">
    <location>
        <begin position="8"/>
        <end position="86"/>
    </location>
</feature>
<feature type="domain" description="Fatty acid hydroxylase" evidence="3">
    <location>
        <begin position="219"/>
        <end position="361"/>
    </location>
</feature>
<feature type="binding site" description="axial binding residue" evidence="4">
    <location>
        <position position="43"/>
    </location>
    <ligand>
        <name>heme</name>
        <dbReference type="ChEBI" id="CHEBI:30413"/>
    </ligand>
    <ligandPart>
        <name>Fe</name>
        <dbReference type="ChEBI" id="CHEBI:18248"/>
    </ligandPart>
</feature>
<feature type="binding site" description="axial binding residue" evidence="4">
    <location>
        <position position="69"/>
    </location>
    <ligand>
        <name>heme</name>
        <dbReference type="ChEBI" id="CHEBI:30413"/>
    </ligand>
    <ligandPart>
        <name>Fe</name>
        <dbReference type="ChEBI" id="CHEBI:18248"/>
    </ligandPart>
</feature>
<feature type="binding site" evidence="1">
    <location>
        <position position="234"/>
    </location>
    <ligand>
        <name>Zn(2+)</name>
        <dbReference type="ChEBI" id="CHEBI:29105"/>
        <label>1</label>
    </ligand>
</feature>
<feature type="binding site" evidence="1">
    <location>
        <position position="239"/>
    </location>
    <ligand>
        <name>Zn(2+)</name>
        <dbReference type="ChEBI" id="CHEBI:29105"/>
        <label>1</label>
    </ligand>
</feature>
<feature type="binding site" evidence="1">
    <location>
        <position position="257"/>
    </location>
    <ligand>
        <name>Zn(2+)</name>
        <dbReference type="ChEBI" id="CHEBI:29105"/>
        <label>1</label>
    </ligand>
</feature>
<feature type="binding site" evidence="1">
    <location>
        <position position="260"/>
    </location>
    <ligand>
        <name>Zn(2+)</name>
        <dbReference type="ChEBI" id="CHEBI:29105"/>
        <label>2</label>
    </ligand>
</feature>
<feature type="binding site" evidence="1">
    <location>
        <position position="261"/>
    </location>
    <ligand>
        <name>Zn(2+)</name>
        <dbReference type="ChEBI" id="CHEBI:29105"/>
        <label>1</label>
    </ligand>
</feature>
<feature type="binding site" evidence="1">
    <location>
        <position position="315"/>
    </location>
    <ligand>
        <name>Zn(2+)</name>
        <dbReference type="ChEBI" id="CHEBI:29105"/>
        <label>2</label>
    </ligand>
</feature>
<feature type="binding site" evidence="1">
    <location>
        <position position="319"/>
    </location>
    <ligand>
        <name>Zn(2+)</name>
        <dbReference type="ChEBI" id="CHEBI:29105"/>
        <label>2</label>
    </ligand>
</feature>
<feature type="binding site" evidence="1">
    <location>
        <position position="336"/>
    </location>
    <ligand>
        <name>Zn(2+)</name>
        <dbReference type="ChEBI" id="CHEBI:29105"/>
        <label>2</label>
    </ligand>
</feature>
<feature type="binding site" evidence="1">
    <location>
        <position position="339"/>
    </location>
    <ligand>
        <name>Zn(2+)</name>
        <dbReference type="ChEBI" id="CHEBI:29105"/>
        <label>1</label>
    </ligand>
</feature>
<feature type="binding site" evidence="1">
    <location>
        <position position="340"/>
    </location>
    <ligand>
        <name>Zn(2+)</name>
        <dbReference type="ChEBI" id="CHEBI:29105"/>
        <label>2</label>
    </ligand>
</feature>
<feature type="splice variant" id="VSP_029837" description="In isoform 3." evidence="11">
    <location>
        <begin position="1"/>
        <end position="208"/>
    </location>
</feature>
<feature type="splice variant" id="VSP_029838" description="In isoform 2." evidence="11">
    <location>
        <begin position="267"/>
        <end position="325"/>
    </location>
</feature>
<feature type="sequence variant" description="In strain: C57BL/6J." evidence="5 6">
    <original>T</original>
    <variation>I</variation>
    <location>
        <position position="103"/>
    </location>
</feature>
<feature type="sequence variant" description="In strain: C57BL/6J." evidence="5 6">
    <original>F</original>
    <variation>L</variation>
    <location>
        <position position="348"/>
    </location>
</feature>
<feature type="sequence variant" description="In strain: C57BL/6J." evidence="5 6">
    <original>L</original>
    <variation>P</variation>
    <location>
        <position position="354"/>
    </location>
</feature>
<organism>
    <name type="scientific">Mus musculus</name>
    <name type="common">Mouse</name>
    <dbReference type="NCBI Taxonomy" id="10090"/>
    <lineage>
        <taxon>Eukaryota</taxon>
        <taxon>Metazoa</taxon>
        <taxon>Chordata</taxon>
        <taxon>Craniata</taxon>
        <taxon>Vertebrata</taxon>
        <taxon>Euteleostomi</taxon>
        <taxon>Mammalia</taxon>
        <taxon>Eutheria</taxon>
        <taxon>Euarchontoglires</taxon>
        <taxon>Glires</taxon>
        <taxon>Rodentia</taxon>
        <taxon>Myomorpha</taxon>
        <taxon>Muroidea</taxon>
        <taxon>Muridae</taxon>
        <taxon>Murinae</taxon>
        <taxon>Mus</taxon>
        <taxon>Mus</taxon>
    </lineage>
</organism>
<proteinExistence type="evidence at protein level"/>
<sequence>MAPAPPPAASFTPAEVQRRLAAGACWVRRGASLYDLTSFVRHHPGGEQLLLARAGQDISADLDGPPHRHSDNARRWLEQYYVGELRADPQDPTENGAVASAETQKTDPALEPQFKVVDWDKDLVDWQKPLLWQVGHLGEKYDEWVHQPVARPIRLFHSDLIEAFSKTVWYSVPIIWVPLVLYLSWSYYRTLTQDNIRLFASLTREYSMMMPESVFIGLFVLGMLFWTFVEYVIHRFLFHMKPPSNSHYLIMLHFVMHGQHHKAPFDGSRLVFPPVPASLVIAFFYVFLRLILPETVGGIIFAGGLLGYVLYDMTHYYLHFGSPHKGSYLYNMKAHHVKHHFEYQKSGFGISTKLWDYFFHTLIPEEAHPKMQ</sequence>
<accession>Q5MPP0</accession>
<accession>Q2M2M0</accession>
<accession>Q5RL53</accession>
<accession>Q8BTH1</accession>
<accession>Q8R0M0</accession>
<accession>Q8R0V1</accession>
<dbReference type="EC" id="1.14.18.-" evidence="10"/>
<dbReference type="EMBL" id="AY660882">
    <property type="protein sequence ID" value="AAV70494.1"/>
    <property type="molecule type" value="mRNA"/>
</dbReference>
<dbReference type="EMBL" id="AK090338">
    <property type="protein sequence ID" value="BAC41174.1"/>
    <property type="molecule type" value="mRNA"/>
</dbReference>
<dbReference type="EMBL" id="AK161502">
    <property type="protein sequence ID" value="BAE36428.1"/>
    <property type="molecule type" value="mRNA"/>
</dbReference>
<dbReference type="EMBL" id="BC026400">
    <property type="protein sequence ID" value="AAH26400.1"/>
    <property type="molecule type" value="mRNA"/>
</dbReference>
<dbReference type="EMBL" id="BC026629">
    <property type="protein sequence ID" value="AAH26629.1"/>
    <property type="molecule type" value="mRNA"/>
</dbReference>
<dbReference type="EMBL" id="BC046985">
    <property type="protein sequence ID" value="AAH46985.1"/>
    <property type="status" value="ALT_FRAME"/>
    <property type="molecule type" value="mRNA"/>
</dbReference>
<dbReference type="EMBL" id="BC111912">
    <property type="protein sequence ID" value="AAI11913.1"/>
    <property type="status" value="ALT_INIT"/>
    <property type="molecule type" value="mRNA"/>
</dbReference>
<dbReference type="EMBL" id="BC128080">
    <property type="protein sequence ID" value="AAI28081.1"/>
    <property type="molecule type" value="mRNA"/>
</dbReference>
<dbReference type="EMBL" id="BC128081">
    <property type="protein sequence ID" value="AAI28082.1"/>
    <property type="molecule type" value="mRNA"/>
</dbReference>
<dbReference type="CCDS" id="CCDS22674.1">
    <molecule id="Q5MPP0-1"/>
</dbReference>
<dbReference type="RefSeq" id="NP_835187.2">
    <molecule id="Q5MPP0-1"/>
    <property type="nucleotide sequence ID" value="NM_178086.3"/>
</dbReference>
<dbReference type="SMR" id="Q5MPP0"/>
<dbReference type="BioGRID" id="237231">
    <property type="interactions" value="1"/>
</dbReference>
<dbReference type="FunCoup" id="Q5MPP0">
    <property type="interactions" value="438"/>
</dbReference>
<dbReference type="STRING" id="10090.ENSMUSP00000043597"/>
<dbReference type="SwissLipids" id="SLP:000000363"/>
<dbReference type="PhosphoSitePlus" id="Q5MPP0"/>
<dbReference type="PaxDb" id="10090-ENSMUSP00000043597"/>
<dbReference type="ProteomicsDB" id="275834">
    <molecule id="Q5MPP0-1"/>
</dbReference>
<dbReference type="ProteomicsDB" id="275835">
    <molecule id="Q5MPP0-2"/>
</dbReference>
<dbReference type="ProteomicsDB" id="275836">
    <molecule id="Q5MPP0-3"/>
</dbReference>
<dbReference type="Antibodypedia" id="30274">
    <property type="antibodies" value="228 antibodies from 30 providers"/>
</dbReference>
<dbReference type="DNASU" id="338521"/>
<dbReference type="Ensembl" id="ENSMUST00000038475.9">
    <molecule id="Q5MPP0-1"/>
    <property type="protein sequence ID" value="ENSMUSP00000043597.9"/>
    <property type="gene ID" value="ENSMUSG00000033579.17"/>
</dbReference>
<dbReference type="GeneID" id="338521"/>
<dbReference type="KEGG" id="mmu:338521"/>
<dbReference type="UCSC" id="uc009nmf.2">
    <molecule id="Q5MPP0-1"/>
    <property type="organism name" value="mouse"/>
</dbReference>
<dbReference type="AGR" id="MGI:2443327"/>
<dbReference type="CTD" id="79152"/>
<dbReference type="MGI" id="MGI:2443327">
    <property type="gene designation" value="Fa2h"/>
</dbReference>
<dbReference type="VEuPathDB" id="HostDB:ENSMUSG00000033579"/>
<dbReference type="eggNOG" id="KOG0537">
    <property type="taxonomic scope" value="Eukaryota"/>
</dbReference>
<dbReference type="eggNOG" id="KOG0539">
    <property type="taxonomic scope" value="Eukaryota"/>
</dbReference>
<dbReference type="GeneTree" id="ENSGT00390000002142"/>
<dbReference type="HOGENOM" id="CLU_034756_2_0_1"/>
<dbReference type="InParanoid" id="Q5MPP0"/>
<dbReference type="OMA" id="WTIIEYV"/>
<dbReference type="OrthoDB" id="2204368at2759"/>
<dbReference type="PhylomeDB" id="Q5MPP0"/>
<dbReference type="TreeFam" id="TF314955"/>
<dbReference type="BRENDA" id="1.14.18.6">
    <property type="organism ID" value="3474"/>
</dbReference>
<dbReference type="Reactome" id="R-MMU-1660661">
    <property type="pathway name" value="Sphingolipid de novo biosynthesis"/>
</dbReference>
<dbReference type="UniPathway" id="UPA00199"/>
<dbReference type="UniPathway" id="UPA00787"/>
<dbReference type="BioGRID-ORCS" id="338521">
    <property type="hits" value="3 hits in 79 CRISPR screens"/>
</dbReference>
<dbReference type="ChiTaRS" id="Fa2h">
    <property type="organism name" value="mouse"/>
</dbReference>
<dbReference type="PRO" id="PR:Q5MPP0"/>
<dbReference type="Proteomes" id="UP000000589">
    <property type="component" value="Chromosome 8"/>
</dbReference>
<dbReference type="RNAct" id="Q5MPP0">
    <property type="molecule type" value="protein"/>
</dbReference>
<dbReference type="Bgee" id="ENSMUSG00000033579">
    <property type="expression patterns" value="Expressed in skin of external ear and 144 other cell types or tissues"/>
</dbReference>
<dbReference type="GO" id="GO:0005783">
    <property type="term" value="C:endoplasmic reticulum"/>
    <property type="evidence" value="ECO:0000314"/>
    <property type="project" value="MGI"/>
</dbReference>
<dbReference type="GO" id="GO:0005789">
    <property type="term" value="C:endoplasmic reticulum membrane"/>
    <property type="evidence" value="ECO:0007669"/>
    <property type="project" value="UniProtKB-SubCell"/>
</dbReference>
<dbReference type="GO" id="GO:0016020">
    <property type="term" value="C:membrane"/>
    <property type="evidence" value="ECO:0000250"/>
    <property type="project" value="UniProtKB"/>
</dbReference>
<dbReference type="GO" id="GO:0120521">
    <property type="term" value="F:4-hydroxysphinganine ceramide fatty acyl 2-hydroxylase activity"/>
    <property type="evidence" value="ECO:0007669"/>
    <property type="project" value="Ensembl"/>
</dbReference>
<dbReference type="GO" id="GO:0080132">
    <property type="term" value="F:fatty acid 2-hydroxylase activity"/>
    <property type="evidence" value="ECO:0000314"/>
    <property type="project" value="MGI"/>
</dbReference>
<dbReference type="GO" id="GO:0120520">
    <property type="term" value="F:free fatty acid 2-hydroxylase activity"/>
    <property type="evidence" value="ECO:0007669"/>
    <property type="project" value="Ensembl"/>
</dbReference>
<dbReference type="GO" id="GO:0020037">
    <property type="term" value="F:heme binding"/>
    <property type="evidence" value="ECO:0007669"/>
    <property type="project" value="InterPro"/>
</dbReference>
<dbReference type="GO" id="GO:0005506">
    <property type="term" value="F:iron ion binding"/>
    <property type="evidence" value="ECO:0007669"/>
    <property type="project" value="InterPro"/>
</dbReference>
<dbReference type="GO" id="GO:0032286">
    <property type="term" value="P:central nervous system myelin maintenance"/>
    <property type="evidence" value="ECO:0000315"/>
    <property type="project" value="MGI"/>
</dbReference>
<dbReference type="GO" id="GO:0046513">
    <property type="term" value="P:ceramide biosynthetic process"/>
    <property type="evidence" value="ECO:0000315"/>
    <property type="project" value="UniProtKB"/>
</dbReference>
<dbReference type="GO" id="GO:0061436">
    <property type="term" value="P:establishment of skin barrier"/>
    <property type="evidence" value="ECO:0000250"/>
    <property type="project" value="UniProtKB"/>
</dbReference>
<dbReference type="GO" id="GO:0006633">
    <property type="term" value="P:fatty acid biosynthetic process"/>
    <property type="evidence" value="ECO:0007669"/>
    <property type="project" value="UniProtKB-KW"/>
</dbReference>
<dbReference type="GO" id="GO:0006631">
    <property type="term" value="P:fatty acid metabolic process"/>
    <property type="evidence" value="ECO:0000314"/>
    <property type="project" value="MGI"/>
</dbReference>
<dbReference type="GO" id="GO:0006682">
    <property type="term" value="P:galactosylceramide biosynthetic process"/>
    <property type="evidence" value="ECO:0000314"/>
    <property type="project" value="UniProtKB"/>
</dbReference>
<dbReference type="GO" id="GO:0006679">
    <property type="term" value="P:glucosylceramide biosynthetic process"/>
    <property type="evidence" value="ECO:0000315"/>
    <property type="project" value="UniProtKB"/>
</dbReference>
<dbReference type="GO" id="GO:0030258">
    <property type="term" value="P:lipid modification"/>
    <property type="evidence" value="ECO:0000314"/>
    <property type="project" value="MGI"/>
</dbReference>
<dbReference type="GO" id="GO:0032287">
    <property type="term" value="P:peripheral nervous system myelin maintenance"/>
    <property type="evidence" value="ECO:0000315"/>
    <property type="project" value="MGI"/>
</dbReference>
<dbReference type="GO" id="GO:0044857">
    <property type="term" value="P:plasma membrane raft organization"/>
    <property type="evidence" value="ECO:0000315"/>
    <property type="project" value="UniProtKB"/>
</dbReference>
<dbReference type="GO" id="GO:1904697">
    <property type="term" value="P:regulation of acinar cell proliferation"/>
    <property type="evidence" value="ECO:0000315"/>
    <property type="project" value="MGI"/>
</dbReference>
<dbReference type="GO" id="GO:0042634">
    <property type="term" value="P:regulation of hair cycle"/>
    <property type="evidence" value="ECO:0000315"/>
    <property type="project" value="MGI"/>
</dbReference>
<dbReference type="GO" id="GO:1904002">
    <property type="term" value="P:regulation of sebum secreting cell proliferation"/>
    <property type="evidence" value="ECO:0000315"/>
    <property type="project" value="MGI"/>
</dbReference>
<dbReference type="GO" id="GO:0001949">
    <property type="term" value="P:sebaceous gland cell differentiation"/>
    <property type="evidence" value="ECO:0000315"/>
    <property type="project" value="MGI"/>
</dbReference>
<dbReference type="FunFam" id="3.10.120.10:FF:000011">
    <property type="entry name" value="Fatty acid 2-hydroxylase"/>
    <property type="match status" value="1"/>
</dbReference>
<dbReference type="Gene3D" id="3.10.120.10">
    <property type="entry name" value="Cytochrome b5-like heme/steroid binding domain"/>
    <property type="match status" value="1"/>
</dbReference>
<dbReference type="InterPro" id="IPR001199">
    <property type="entry name" value="Cyt_B5-like_heme/steroid-bd"/>
</dbReference>
<dbReference type="InterPro" id="IPR036400">
    <property type="entry name" value="Cyt_B5-like_heme/steroid_sf"/>
</dbReference>
<dbReference type="InterPro" id="IPR018506">
    <property type="entry name" value="Cyt_B5_heme-BS"/>
</dbReference>
<dbReference type="InterPro" id="IPR006694">
    <property type="entry name" value="Fatty_acid_hydroxylase"/>
</dbReference>
<dbReference type="InterPro" id="IPR014430">
    <property type="entry name" value="Scs7"/>
</dbReference>
<dbReference type="PANTHER" id="PTHR12863:SF1">
    <property type="entry name" value="FATTY ACID 2-HYDROXYLASE"/>
    <property type="match status" value="1"/>
</dbReference>
<dbReference type="PANTHER" id="PTHR12863">
    <property type="entry name" value="FATTY ACID HYDROXYLASE"/>
    <property type="match status" value="1"/>
</dbReference>
<dbReference type="Pfam" id="PF00173">
    <property type="entry name" value="Cyt-b5"/>
    <property type="match status" value="1"/>
</dbReference>
<dbReference type="Pfam" id="PF04116">
    <property type="entry name" value="FA_hydroxylase"/>
    <property type="match status" value="1"/>
</dbReference>
<dbReference type="PIRSF" id="PIRSF005149">
    <property type="entry name" value="IPC-B_HD"/>
    <property type="match status" value="1"/>
</dbReference>
<dbReference type="PRINTS" id="PR00363">
    <property type="entry name" value="CYTOCHROMEB5"/>
</dbReference>
<dbReference type="SMART" id="SM01117">
    <property type="entry name" value="Cyt-b5"/>
    <property type="match status" value="1"/>
</dbReference>
<dbReference type="SUPFAM" id="SSF55856">
    <property type="entry name" value="Cytochrome b5-like heme/steroid binding domain"/>
    <property type="match status" value="1"/>
</dbReference>
<dbReference type="PROSITE" id="PS00191">
    <property type="entry name" value="CYTOCHROME_B5_1"/>
    <property type="match status" value="1"/>
</dbReference>
<dbReference type="PROSITE" id="PS50255">
    <property type="entry name" value="CYTOCHROME_B5_2"/>
    <property type="match status" value="1"/>
</dbReference>
<comment type="function">
    <text evidence="2 5 7 8 9 10">Catalyzes the hydroxylation of free fatty acids at the C-2 position to produce 2-hydroxy fatty acids, which are building blocks of sphingolipids and glycosphingolipids common in neural tissue and epidermis (PubMed:15658937, PubMed:16998236, PubMed:22517924). FA2H is stereospecific for the production of (R)-2-hydroxy fatty acids (PubMed:22517924). Plays an essential role in the synthesis of galactosphingolipids of the myelin sheath (PubMed:15658937, PubMed:18815260). Responsible for the synthesis of sphingolipids and glycosphingolipids involved in the formation of epidermal lamellar bodies critical for skin permeability barrier (By similarity). Participates in the synthesis of glycosphingolipids and a fraction of type II wax diesters in sebaceous gland, specifically regulating hair follicle homeostasis (PubMed:21628453). Involved in the synthesis of sphingolipids of plasma membrane rafts, controlling lipid raft mobility and trafficking of raft-associated proteins (PubMed:22517924).</text>
</comment>
<comment type="catalytic activity">
    <reaction evidence="10">
        <text>a 1,2-saturated fatty acid + 2 Fe(II)-[cytochrome b5] + O2 + 2 H(+) = a (R)-2-hydroxy fatty acid + 2 Fe(III)-[cytochrome b5] + H2O</text>
        <dbReference type="Rhea" id="RHEA:38855"/>
        <dbReference type="Rhea" id="RHEA-COMP:10438"/>
        <dbReference type="Rhea" id="RHEA-COMP:10439"/>
        <dbReference type="ChEBI" id="CHEBI:15377"/>
        <dbReference type="ChEBI" id="CHEBI:15378"/>
        <dbReference type="ChEBI" id="CHEBI:15379"/>
        <dbReference type="ChEBI" id="CHEBI:29033"/>
        <dbReference type="ChEBI" id="CHEBI:29034"/>
        <dbReference type="ChEBI" id="CHEBI:76177"/>
        <dbReference type="ChEBI" id="CHEBI:83955"/>
    </reaction>
    <physiologicalReaction direction="left-to-right" evidence="10">
        <dbReference type="Rhea" id="RHEA:38856"/>
    </physiologicalReaction>
</comment>
<comment type="catalytic activity">
    <reaction evidence="10">
        <text>hexadecanoate + 2 Fe(II)-[cytochrome b5] + O2 + 2 H(+) = (R)-2-hydroxyhexadecanoate + 2 Fe(III)-[cytochrome b5] + H2O</text>
        <dbReference type="Rhea" id="RHEA:38551"/>
        <dbReference type="Rhea" id="RHEA-COMP:10438"/>
        <dbReference type="Rhea" id="RHEA-COMP:10439"/>
        <dbReference type="ChEBI" id="CHEBI:7896"/>
        <dbReference type="ChEBI" id="CHEBI:15377"/>
        <dbReference type="ChEBI" id="CHEBI:15378"/>
        <dbReference type="ChEBI" id="CHEBI:15379"/>
        <dbReference type="ChEBI" id="CHEBI:29033"/>
        <dbReference type="ChEBI" id="CHEBI:29034"/>
        <dbReference type="ChEBI" id="CHEBI:75927"/>
    </reaction>
    <physiologicalReaction direction="left-to-right" evidence="10">
        <dbReference type="Rhea" id="RHEA:38552"/>
    </physiologicalReaction>
</comment>
<comment type="catalytic activity">
    <reaction evidence="2">
        <text>octadecanoate + 2 Fe(II)-[cytochrome b5] + O2 + 2 H(+) = (R)-2-hydroxyoctadecanoate + 2 Fe(III)-[cytochrome b5] + H2O</text>
        <dbReference type="Rhea" id="RHEA:39815"/>
        <dbReference type="Rhea" id="RHEA-COMP:10438"/>
        <dbReference type="Rhea" id="RHEA-COMP:10439"/>
        <dbReference type="ChEBI" id="CHEBI:15377"/>
        <dbReference type="ChEBI" id="CHEBI:15378"/>
        <dbReference type="ChEBI" id="CHEBI:15379"/>
        <dbReference type="ChEBI" id="CHEBI:25629"/>
        <dbReference type="ChEBI" id="CHEBI:29033"/>
        <dbReference type="ChEBI" id="CHEBI:29034"/>
        <dbReference type="ChEBI" id="CHEBI:57562"/>
    </reaction>
    <physiologicalReaction direction="left-to-right" evidence="2">
        <dbReference type="Rhea" id="RHEA:39816"/>
    </physiologicalReaction>
</comment>
<comment type="catalytic activity">
    <reaction evidence="2">
        <text>docosanoate + 2 Fe(II)-[cytochrome b5] + O2 + 2 H(+) = 2-hydroxydocosanoate + 2 Fe(III)-[cytochrome b5] + H2O</text>
        <dbReference type="Rhea" id="RHEA:39819"/>
        <dbReference type="Rhea" id="RHEA-COMP:10438"/>
        <dbReference type="Rhea" id="RHEA-COMP:10439"/>
        <dbReference type="ChEBI" id="CHEBI:15377"/>
        <dbReference type="ChEBI" id="CHEBI:15378"/>
        <dbReference type="ChEBI" id="CHEBI:15379"/>
        <dbReference type="ChEBI" id="CHEBI:23858"/>
        <dbReference type="ChEBI" id="CHEBI:29033"/>
        <dbReference type="ChEBI" id="CHEBI:29034"/>
        <dbReference type="ChEBI" id="CHEBI:76722"/>
    </reaction>
    <physiologicalReaction direction="left-to-right" evidence="2">
        <dbReference type="Rhea" id="RHEA:39820"/>
    </physiologicalReaction>
</comment>
<comment type="catalytic activity">
    <reaction evidence="2">
        <text>tetracosanoate + 2 Fe(II)-[cytochrome b5] + O2 + 2 H(+) = (R)-2-hydroxytetracosanoate + 2 Fe(III)-[cytochrome b5] + H2O</text>
        <dbReference type="Rhea" id="RHEA:38559"/>
        <dbReference type="Rhea" id="RHEA-COMP:10438"/>
        <dbReference type="Rhea" id="RHEA-COMP:10439"/>
        <dbReference type="ChEBI" id="CHEBI:15377"/>
        <dbReference type="ChEBI" id="CHEBI:15378"/>
        <dbReference type="ChEBI" id="CHEBI:15379"/>
        <dbReference type="ChEBI" id="CHEBI:29033"/>
        <dbReference type="ChEBI" id="CHEBI:29034"/>
        <dbReference type="ChEBI" id="CHEBI:31014"/>
        <dbReference type="ChEBI" id="CHEBI:75935"/>
    </reaction>
    <physiologicalReaction direction="left-to-right" evidence="2">
        <dbReference type="Rhea" id="RHEA:38560"/>
    </physiologicalReaction>
</comment>
<comment type="cofactor">
    <cofactor evidence="1">
        <name>Zn(2+)</name>
        <dbReference type="ChEBI" id="CHEBI:29105"/>
    </cofactor>
    <text evidence="1">Binds 2 Zn(2+) ions per subunit that likely form a catalytic dimetal center.</text>
</comment>
<comment type="pathway">
    <text evidence="5 8">Sphingolipid metabolism; galactosylceramide biosynthesis.</text>
</comment>
<comment type="pathway">
    <text evidence="17 18">Lipid metabolism; fatty acid metabolism.</text>
</comment>
<comment type="subcellular location">
    <subcellularLocation>
        <location evidence="5">Endoplasmic reticulum membrane</location>
        <topology evidence="5">Multi-pass membrane protein</topology>
    </subcellularLocation>
    <subcellularLocation>
        <location evidence="5">Microsome membrane</location>
        <topology evidence="5">Multi-pass membrane protein</topology>
    </subcellularLocation>
</comment>
<comment type="alternative products">
    <event type="alternative splicing"/>
    <isoform>
        <id>Q5MPP0-1</id>
        <name>1</name>
        <sequence type="displayed"/>
    </isoform>
    <isoform>
        <id>Q5MPP0-2</id>
        <name>2</name>
        <sequence type="described" ref="VSP_029838"/>
    </isoform>
    <isoform>
        <id>Q5MPP0-3</id>
        <name>3</name>
        <sequence type="described" ref="VSP_029837"/>
    </isoform>
</comment>
<comment type="tissue specificity">
    <text evidence="5 7 8 9">Expressed in brain (at protein level) (PubMed:16998236). Detected in cerebellum and forebrain (PubMed:15658937, PubMed:18815260). Expression in the white matter is mainly restricted in oligodendrocytes (PubMed:15658937). Expressed in stomach, kidney, skin and testis (PubMed:15658937). Expressed in sebaceous gland (PubMed:21628453).</text>
</comment>
<comment type="developmental stage">
    <text evidence="5 7">Levels increase rapidly in brains from newborns, in parallel with myelination in the central nervous system. Present at very low levels in newborns. Levels are highest at 2 to 3 weeks, and then decrease slightly to reach an constant, intermediate level after 4 months. Constitutively expressed at an intermediate level throughout adult life.</text>
</comment>
<comment type="domain">
    <text>The histidine box domains may contain the active site and/or be involved in metal ion binding.</text>
</comment>
<comment type="domain">
    <text evidence="2">The N-terminal cytochrome b5 heme-binding domain is essential for catalytic activity.</text>
</comment>
<comment type="disruption phenotype">
    <text evidence="8 9">Knockout mice have normal oligodentrocyte differentiation and develope structural and functional normal myelin up to early adulthood. However, aged knockout mice show a massive axon and myelin sheath degeneration in the spinal cord (PubMed:18815260). Knockout mice show delayed fur development and a cyclic alopecia (PubMed:21628453).</text>
</comment>
<comment type="similarity">
    <text evidence="16">Belongs to the sterol desaturase family. SCS7 subfamily.</text>
</comment>
<comment type="sequence caution" evidence="16">
    <conflict type="frameshift">
        <sequence resource="EMBL-CDS" id="AAH46985"/>
    </conflict>
</comment>
<comment type="sequence caution" evidence="16">
    <conflict type="erroneous initiation">
        <sequence resource="EMBL-CDS" id="AAI11913"/>
    </conflict>
</comment>
<name>FA2H_MOUSE</name>
<gene>
    <name evidence="12 13 14 19" type="primary">Fa2h</name>
    <name type="synonym">Faah</name>
</gene>
<protein>
    <recommendedName>
        <fullName evidence="12 13 14 15">Fatty acid 2-hydroxylase</fullName>
        <ecNumber evidence="10">1.14.18.-</ecNumber>
    </recommendedName>
    <alternativeName>
        <fullName>Fatty acid alpha-hydroxylase</fullName>
    </alternativeName>
</protein>
<reference key="1">
    <citation type="journal article" date="2005" name="Biochem. J.">
        <title>A mammalian fatty acid hydroxylase responsible for the formation of alpha-hydroxylated galactosylceramide in myelin.</title>
        <authorList>
            <person name="Eckhardt M."/>
            <person name="Yaghootfam A."/>
            <person name="Fewou S.N."/>
            <person name="Zoeller I."/>
            <person name="Gieselmann V."/>
        </authorList>
    </citation>
    <scope>NUCLEOTIDE SEQUENCE [MRNA] (ISOFORM 1)</scope>
    <scope>VARIANTS ILE-103; LEU-348 AND PRO-354</scope>
    <scope>FUNCTION</scope>
    <scope>SUBCELLULAR LOCATION</scope>
    <scope>DEVELOPMENTAL STAGE</scope>
    <scope>TISSUE SPECIFICITY</scope>
    <scope>PATHWAY</scope>
    <source>
        <strain>FVB/N</strain>
    </source>
</reference>
<reference key="2">
    <citation type="journal article" date="2005" name="Science">
        <title>The transcriptional landscape of the mammalian genome.</title>
        <authorList>
            <person name="Carninci P."/>
            <person name="Kasukawa T."/>
            <person name="Katayama S."/>
            <person name="Gough J."/>
            <person name="Frith M.C."/>
            <person name="Maeda N."/>
            <person name="Oyama R."/>
            <person name="Ravasi T."/>
            <person name="Lenhard B."/>
            <person name="Wells C."/>
            <person name="Kodzius R."/>
            <person name="Shimokawa K."/>
            <person name="Bajic V.B."/>
            <person name="Brenner S.E."/>
            <person name="Batalov S."/>
            <person name="Forrest A.R."/>
            <person name="Zavolan M."/>
            <person name="Davis M.J."/>
            <person name="Wilming L.G."/>
            <person name="Aidinis V."/>
            <person name="Allen J.E."/>
            <person name="Ambesi-Impiombato A."/>
            <person name="Apweiler R."/>
            <person name="Aturaliya R.N."/>
            <person name="Bailey T.L."/>
            <person name="Bansal M."/>
            <person name="Baxter L."/>
            <person name="Beisel K.W."/>
            <person name="Bersano T."/>
            <person name="Bono H."/>
            <person name="Chalk A.M."/>
            <person name="Chiu K.P."/>
            <person name="Choudhary V."/>
            <person name="Christoffels A."/>
            <person name="Clutterbuck D.R."/>
            <person name="Crowe M.L."/>
            <person name="Dalla E."/>
            <person name="Dalrymple B.P."/>
            <person name="de Bono B."/>
            <person name="Della Gatta G."/>
            <person name="di Bernardo D."/>
            <person name="Down T."/>
            <person name="Engstrom P."/>
            <person name="Fagiolini M."/>
            <person name="Faulkner G."/>
            <person name="Fletcher C.F."/>
            <person name="Fukushima T."/>
            <person name="Furuno M."/>
            <person name="Futaki S."/>
            <person name="Gariboldi M."/>
            <person name="Georgii-Hemming P."/>
            <person name="Gingeras T.R."/>
            <person name="Gojobori T."/>
            <person name="Green R.E."/>
            <person name="Gustincich S."/>
            <person name="Harbers M."/>
            <person name="Hayashi Y."/>
            <person name="Hensch T.K."/>
            <person name="Hirokawa N."/>
            <person name="Hill D."/>
            <person name="Huminiecki L."/>
            <person name="Iacono M."/>
            <person name="Ikeo K."/>
            <person name="Iwama A."/>
            <person name="Ishikawa T."/>
            <person name="Jakt M."/>
            <person name="Kanapin A."/>
            <person name="Katoh M."/>
            <person name="Kawasawa Y."/>
            <person name="Kelso J."/>
            <person name="Kitamura H."/>
            <person name="Kitano H."/>
            <person name="Kollias G."/>
            <person name="Krishnan S.P."/>
            <person name="Kruger A."/>
            <person name="Kummerfeld S.K."/>
            <person name="Kurochkin I.V."/>
            <person name="Lareau L.F."/>
            <person name="Lazarevic D."/>
            <person name="Lipovich L."/>
            <person name="Liu J."/>
            <person name="Liuni S."/>
            <person name="McWilliam S."/>
            <person name="Madan Babu M."/>
            <person name="Madera M."/>
            <person name="Marchionni L."/>
            <person name="Matsuda H."/>
            <person name="Matsuzawa S."/>
            <person name="Miki H."/>
            <person name="Mignone F."/>
            <person name="Miyake S."/>
            <person name="Morris K."/>
            <person name="Mottagui-Tabar S."/>
            <person name="Mulder N."/>
            <person name="Nakano N."/>
            <person name="Nakauchi H."/>
            <person name="Ng P."/>
            <person name="Nilsson R."/>
            <person name="Nishiguchi S."/>
            <person name="Nishikawa S."/>
            <person name="Nori F."/>
            <person name="Ohara O."/>
            <person name="Okazaki Y."/>
            <person name="Orlando V."/>
            <person name="Pang K.C."/>
            <person name="Pavan W.J."/>
            <person name="Pavesi G."/>
            <person name="Pesole G."/>
            <person name="Petrovsky N."/>
            <person name="Piazza S."/>
            <person name="Reed J."/>
            <person name="Reid J.F."/>
            <person name="Ring B.Z."/>
            <person name="Ringwald M."/>
            <person name="Rost B."/>
            <person name="Ruan Y."/>
            <person name="Salzberg S.L."/>
            <person name="Sandelin A."/>
            <person name="Schneider C."/>
            <person name="Schoenbach C."/>
            <person name="Sekiguchi K."/>
            <person name="Semple C.A."/>
            <person name="Seno S."/>
            <person name="Sessa L."/>
            <person name="Sheng Y."/>
            <person name="Shibata Y."/>
            <person name="Shimada H."/>
            <person name="Shimada K."/>
            <person name="Silva D."/>
            <person name="Sinclair B."/>
            <person name="Sperling S."/>
            <person name="Stupka E."/>
            <person name="Sugiura K."/>
            <person name="Sultana R."/>
            <person name="Takenaka Y."/>
            <person name="Taki K."/>
            <person name="Tammoja K."/>
            <person name="Tan S.L."/>
            <person name="Tang S."/>
            <person name="Taylor M.S."/>
            <person name="Tegner J."/>
            <person name="Teichmann S.A."/>
            <person name="Ueda H.R."/>
            <person name="van Nimwegen E."/>
            <person name="Verardo R."/>
            <person name="Wei C.L."/>
            <person name="Yagi K."/>
            <person name="Yamanishi H."/>
            <person name="Zabarovsky E."/>
            <person name="Zhu S."/>
            <person name="Zimmer A."/>
            <person name="Hide W."/>
            <person name="Bult C."/>
            <person name="Grimmond S.M."/>
            <person name="Teasdale R.D."/>
            <person name="Liu E.T."/>
            <person name="Brusic V."/>
            <person name="Quackenbush J."/>
            <person name="Wahlestedt C."/>
            <person name="Mattick J.S."/>
            <person name="Hume D.A."/>
            <person name="Kai C."/>
            <person name="Sasaki D."/>
            <person name="Tomaru Y."/>
            <person name="Fukuda S."/>
            <person name="Kanamori-Katayama M."/>
            <person name="Suzuki M."/>
            <person name="Aoki J."/>
            <person name="Arakawa T."/>
            <person name="Iida J."/>
            <person name="Imamura K."/>
            <person name="Itoh M."/>
            <person name="Kato T."/>
            <person name="Kawaji H."/>
            <person name="Kawagashira N."/>
            <person name="Kawashima T."/>
            <person name="Kojima M."/>
            <person name="Kondo S."/>
            <person name="Konno H."/>
            <person name="Nakano K."/>
            <person name="Ninomiya N."/>
            <person name="Nishio T."/>
            <person name="Okada M."/>
            <person name="Plessy C."/>
            <person name="Shibata K."/>
            <person name="Shiraki T."/>
            <person name="Suzuki S."/>
            <person name="Tagami M."/>
            <person name="Waki K."/>
            <person name="Watahiki A."/>
            <person name="Okamura-Oho Y."/>
            <person name="Suzuki H."/>
            <person name="Kawai J."/>
            <person name="Hayashizaki Y."/>
        </authorList>
    </citation>
    <scope>NUCLEOTIDE SEQUENCE [LARGE SCALE MRNA] (ISOFORM 1)</scope>
    <scope>VARIANTS ILE-103; LEU-348 AND PRO-354</scope>
    <source>
        <strain>C57BL/6J</strain>
        <tissue>Diencephalon</tissue>
        <tissue>Testis</tissue>
    </source>
</reference>
<reference key="3">
    <citation type="journal article" date="2004" name="Genome Res.">
        <title>The status, quality, and expansion of the NIH full-length cDNA project: the Mammalian Gene Collection (MGC).</title>
        <authorList>
            <consortium name="The MGC Project Team"/>
        </authorList>
    </citation>
    <scope>NUCLEOTIDE SEQUENCE [LARGE SCALE MRNA] (ISOFORMS 1; 2 AND 3)</scope>
    <source>
        <strain>FVB/N</strain>
        <tissue>Colon</tissue>
    </source>
</reference>
<reference key="4">
    <citation type="journal article" date="2006" name="J. Lipid Res.">
        <title>FA2H-dependent fatty acid 2-hydroxylation in postnatal mouse brain.</title>
        <authorList>
            <person name="Alderson N.L."/>
            <person name="Maldonado E.N."/>
            <person name="Kern M.J."/>
            <person name="Bhat N.R."/>
            <person name="Hama H."/>
        </authorList>
    </citation>
    <scope>FUNCTION</scope>
    <scope>DEVELOPMENTAL STAGE</scope>
    <scope>TISSUE SPECIFICITY</scope>
</reference>
<reference key="5">
    <citation type="journal article" date="2008" name="J. Neurosci.">
        <title>Absence of 2-hydroxylated sphingolipids is compatible with normal neural development but causes late-onset axon and myelin sheath degeneration.</title>
        <authorList>
            <person name="Zoeller I."/>
            <person name="Meixner M."/>
            <person name="Hartmann D."/>
            <person name="Buessow H."/>
            <person name="Meyer R."/>
            <person name="Gieselmann V."/>
            <person name="Eckhardt M."/>
        </authorList>
    </citation>
    <scope>DISRUPTION PHENOTYPE</scope>
    <scope>FUNCTION</scope>
    <scope>TISSUE SPECIFICITY</scope>
    <scope>PATHWAY</scope>
</reference>
<reference key="6">
    <citation type="journal article" date="2011" name="J. Biol. Chem.">
        <title>Normal fur development and sebum production depends on fatty acid 2-hydroxylase expression in sebaceous glands.</title>
        <authorList>
            <person name="Maier H."/>
            <person name="Meixner M."/>
            <person name="Hartmann D."/>
            <person name="Sandhoff R."/>
            <person name="Wang-Eckhardt L."/>
            <person name="Zoeller I."/>
            <person name="Gieselmann V."/>
            <person name="Eckhardt M."/>
        </authorList>
    </citation>
    <scope>FUNCTION</scope>
    <scope>TISSUE SPECIFICITY</scope>
    <scope>DISRUPTION PHENOTYPE</scope>
</reference>
<reference key="7">
    <citation type="journal article" date="2012" name="J. Lipid Res.">
        <title>Stereospecificity of fatty acid 2-hydroxylase and differential functions of 2-hydroxy fatty acid enantiomers.</title>
        <authorList>
            <person name="Guo L."/>
            <person name="Zhang X."/>
            <person name="Zhou D."/>
            <person name="Okunade A.L."/>
            <person name="Su X."/>
        </authorList>
    </citation>
    <scope>FUNCTION</scope>
    <scope>CATALYTIC ACTIVITY</scope>
</reference>
<keyword id="KW-0025">Alternative splicing</keyword>
<keyword id="KW-0256">Endoplasmic reticulum</keyword>
<keyword id="KW-0275">Fatty acid biosynthesis</keyword>
<keyword id="KW-0276">Fatty acid metabolism</keyword>
<keyword id="KW-0349">Heme</keyword>
<keyword id="KW-0408">Iron</keyword>
<keyword id="KW-0444">Lipid biosynthesis</keyword>
<keyword id="KW-0443">Lipid metabolism</keyword>
<keyword id="KW-0472">Membrane</keyword>
<keyword id="KW-0479">Metal-binding</keyword>
<keyword id="KW-0492">Microsome</keyword>
<keyword id="KW-0560">Oxidoreductase</keyword>
<keyword id="KW-1185">Reference proteome</keyword>
<keyword id="KW-0746">Sphingolipid metabolism</keyword>
<keyword id="KW-0812">Transmembrane</keyword>
<keyword id="KW-1133">Transmembrane helix</keyword>
<keyword id="KW-0862">Zinc</keyword>
<evidence type="ECO:0000250" key="1">
    <source>
        <dbReference type="UniProtKB" id="Q03529"/>
    </source>
</evidence>
<evidence type="ECO:0000250" key="2">
    <source>
        <dbReference type="UniProtKB" id="Q7L5A8"/>
    </source>
</evidence>
<evidence type="ECO:0000255" key="3"/>
<evidence type="ECO:0000255" key="4">
    <source>
        <dbReference type="PROSITE-ProRule" id="PRU00279"/>
    </source>
</evidence>
<evidence type="ECO:0000269" key="5">
    <source>
    </source>
</evidence>
<evidence type="ECO:0000269" key="6">
    <source>
    </source>
</evidence>
<evidence type="ECO:0000269" key="7">
    <source>
    </source>
</evidence>
<evidence type="ECO:0000269" key="8">
    <source>
    </source>
</evidence>
<evidence type="ECO:0000269" key="9">
    <source>
    </source>
</evidence>
<evidence type="ECO:0000269" key="10">
    <source>
    </source>
</evidence>
<evidence type="ECO:0000303" key="11">
    <source>
    </source>
</evidence>
<evidence type="ECO:0000303" key="12">
    <source>
    </source>
</evidence>
<evidence type="ECO:0000303" key="13">
    <source>
    </source>
</evidence>
<evidence type="ECO:0000303" key="14">
    <source>
    </source>
</evidence>
<evidence type="ECO:0000303" key="15">
    <source>
    </source>
</evidence>
<evidence type="ECO:0000305" key="16"/>
<evidence type="ECO:0000305" key="17">
    <source>
    </source>
</evidence>
<evidence type="ECO:0000305" key="18">
    <source>
    </source>
</evidence>
<evidence type="ECO:0000312" key="19">
    <source>
        <dbReference type="MGI" id="MGI:2443327"/>
    </source>
</evidence>